<reference key="1">
    <citation type="journal article" date="2006" name="J. Bacteriol.">
        <title>Complete genome sequence of Yersinia pestis strains Antiqua and Nepal516: evidence of gene reduction in an emerging pathogen.</title>
        <authorList>
            <person name="Chain P.S.G."/>
            <person name="Hu P."/>
            <person name="Malfatti S.A."/>
            <person name="Radnedge L."/>
            <person name="Larimer F."/>
            <person name="Vergez L.M."/>
            <person name="Worsham P."/>
            <person name="Chu M.C."/>
            <person name="Andersen G.L."/>
        </authorList>
    </citation>
    <scope>NUCLEOTIDE SEQUENCE [LARGE SCALE GENOMIC DNA]</scope>
    <source>
        <strain>Antiqua</strain>
    </source>
</reference>
<keyword id="KW-0028">Amino-acid biosynthesis</keyword>
<keyword id="KW-0055">Arginine biosynthesis</keyword>
<keyword id="KW-0963">Cytoplasm</keyword>
<keyword id="KW-0456">Lyase</keyword>
<protein>
    <recommendedName>
        <fullName evidence="1">Argininosuccinate lyase</fullName>
        <shortName evidence="1">ASAL</shortName>
        <ecNumber evidence="1">4.3.2.1</ecNumber>
    </recommendedName>
    <alternativeName>
        <fullName evidence="1">Arginosuccinase</fullName>
    </alternativeName>
</protein>
<accession>Q1CBV4</accession>
<organism>
    <name type="scientific">Yersinia pestis bv. Antiqua (strain Antiqua)</name>
    <dbReference type="NCBI Taxonomy" id="360102"/>
    <lineage>
        <taxon>Bacteria</taxon>
        <taxon>Pseudomonadati</taxon>
        <taxon>Pseudomonadota</taxon>
        <taxon>Gammaproteobacteria</taxon>
        <taxon>Enterobacterales</taxon>
        <taxon>Yersiniaceae</taxon>
        <taxon>Yersinia</taxon>
    </lineage>
</organism>
<proteinExistence type="inferred from homology"/>
<sequence>MALWGGRFSQAADQRFKQFNDSLRFDYRLAEQDIIGSVAWSKALVTVGVLNADEQQQLEQALSVLLEEVQANPHAILASDAEDIHSWVETKLIDKVGDLGKKLHTGRSRNDQVATDLKLWCKFQITELQTAVQQLQQALVMTAEANQDAVMPGYTHLQRAQPVTFAHWCLAYVEMLSRDESRLQDTLKRLDVSPLGCGALAGTAYAIDREQLAGWLGFASATRNSLDSVSDRDHVLELLSDASIGMVHLSRFAEDLIFFNSGEAAFVDLSDRVTSGSSLMPQKKNPDALELIRGKCGRVQGALTGMTMTLKGLPLAYNKDMQEDKEGLFDALDTWLDCLHMAALVLDGIQVKRPRCKEAAEQGYANATELADYLVAKGVPFREAHHIVGEAVVEAIRQGKALEALALSDLQQFSSVIGDDVYPILALQSCLDKRVAKGGVSPQQVASAIAEAKARLF</sequence>
<dbReference type="EC" id="4.3.2.1" evidence="1"/>
<dbReference type="EMBL" id="CP000308">
    <property type="protein sequence ID" value="ABG12068.1"/>
    <property type="molecule type" value="Genomic_DNA"/>
</dbReference>
<dbReference type="RefSeq" id="WP_002209487.1">
    <property type="nucleotide sequence ID" value="NZ_CP009906.1"/>
</dbReference>
<dbReference type="SMR" id="Q1CBV4"/>
<dbReference type="GeneID" id="57974777"/>
<dbReference type="KEGG" id="ypa:YPA_0099"/>
<dbReference type="UniPathway" id="UPA00068">
    <property type="reaction ID" value="UER00114"/>
</dbReference>
<dbReference type="Proteomes" id="UP000001971">
    <property type="component" value="Chromosome"/>
</dbReference>
<dbReference type="GO" id="GO:0005829">
    <property type="term" value="C:cytosol"/>
    <property type="evidence" value="ECO:0007669"/>
    <property type="project" value="TreeGrafter"/>
</dbReference>
<dbReference type="GO" id="GO:0004056">
    <property type="term" value="F:argininosuccinate lyase activity"/>
    <property type="evidence" value="ECO:0007669"/>
    <property type="project" value="UniProtKB-UniRule"/>
</dbReference>
<dbReference type="GO" id="GO:0042450">
    <property type="term" value="P:arginine biosynthetic process via ornithine"/>
    <property type="evidence" value="ECO:0007669"/>
    <property type="project" value="InterPro"/>
</dbReference>
<dbReference type="GO" id="GO:0006526">
    <property type="term" value="P:L-arginine biosynthetic process"/>
    <property type="evidence" value="ECO:0007669"/>
    <property type="project" value="UniProtKB-UniRule"/>
</dbReference>
<dbReference type="CDD" id="cd01359">
    <property type="entry name" value="Argininosuccinate_lyase"/>
    <property type="match status" value="1"/>
</dbReference>
<dbReference type="FunFam" id="1.10.275.10:FF:000004">
    <property type="entry name" value="Argininosuccinate lyase"/>
    <property type="match status" value="1"/>
</dbReference>
<dbReference type="FunFam" id="1.10.40.30:FF:000001">
    <property type="entry name" value="Argininosuccinate lyase"/>
    <property type="match status" value="1"/>
</dbReference>
<dbReference type="FunFam" id="1.20.200.10:FF:000006">
    <property type="entry name" value="Argininosuccinate lyase"/>
    <property type="match status" value="1"/>
</dbReference>
<dbReference type="Gene3D" id="1.10.40.30">
    <property type="entry name" value="Fumarase/aspartase (C-terminal domain)"/>
    <property type="match status" value="1"/>
</dbReference>
<dbReference type="Gene3D" id="1.20.200.10">
    <property type="entry name" value="Fumarase/aspartase (Central domain)"/>
    <property type="match status" value="1"/>
</dbReference>
<dbReference type="Gene3D" id="1.10.275.10">
    <property type="entry name" value="Fumarase/aspartase (N-terminal domain)"/>
    <property type="match status" value="1"/>
</dbReference>
<dbReference type="HAMAP" id="MF_00006">
    <property type="entry name" value="Arg_succ_lyase"/>
    <property type="match status" value="1"/>
</dbReference>
<dbReference type="InterPro" id="IPR029419">
    <property type="entry name" value="Arg_succ_lyase_C"/>
</dbReference>
<dbReference type="InterPro" id="IPR009049">
    <property type="entry name" value="Argininosuccinate_lyase"/>
</dbReference>
<dbReference type="InterPro" id="IPR024083">
    <property type="entry name" value="Fumarase/histidase_N"/>
</dbReference>
<dbReference type="InterPro" id="IPR020557">
    <property type="entry name" value="Fumarate_lyase_CS"/>
</dbReference>
<dbReference type="InterPro" id="IPR000362">
    <property type="entry name" value="Fumarate_lyase_fam"/>
</dbReference>
<dbReference type="InterPro" id="IPR022761">
    <property type="entry name" value="Fumarate_lyase_N"/>
</dbReference>
<dbReference type="InterPro" id="IPR008948">
    <property type="entry name" value="L-Aspartase-like"/>
</dbReference>
<dbReference type="NCBIfam" id="TIGR00838">
    <property type="entry name" value="argH"/>
    <property type="match status" value="1"/>
</dbReference>
<dbReference type="NCBIfam" id="NF008964">
    <property type="entry name" value="PRK12308.1"/>
    <property type="match status" value="1"/>
</dbReference>
<dbReference type="PANTHER" id="PTHR43814">
    <property type="entry name" value="ARGININOSUCCINATE LYASE"/>
    <property type="match status" value="1"/>
</dbReference>
<dbReference type="PANTHER" id="PTHR43814:SF1">
    <property type="entry name" value="ARGININOSUCCINATE LYASE"/>
    <property type="match status" value="1"/>
</dbReference>
<dbReference type="Pfam" id="PF14698">
    <property type="entry name" value="ASL_C2"/>
    <property type="match status" value="1"/>
</dbReference>
<dbReference type="Pfam" id="PF00206">
    <property type="entry name" value="Lyase_1"/>
    <property type="match status" value="1"/>
</dbReference>
<dbReference type="PRINTS" id="PR00145">
    <property type="entry name" value="ARGSUCLYASE"/>
</dbReference>
<dbReference type="PRINTS" id="PR00149">
    <property type="entry name" value="FUMRATELYASE"/>
</dbReference>
<dbReference type="SUPFAM" id="SSF48557">
    <property type="entry name" value="L-aspartase-like"/>
    <property type="match status" value="1"/>
</dbReference>
<dbReference type="PROSITE" id="PS00163">
    <property type="entry name" value="FUMARATE_LYASES"/>
    <property type="match status" value="1"/>
</dbReference>
<evidence type="ECO:0000255" key="1">
    <source>
        <dbReference type="HAMAP-Rule" id="MF_00006"/>
    </source>
</evidence>
<gene>
    <name evidence="1" type="primary">argH</name>
    <name type="ordered locus">YPA_0099</name>
</gene>
<name>ARLY_YERPA</name>
<feature type="chain" id="PRO_1000000553" description="Argininosuccinate lyase">
    <location>
        <begin position="1"/>
        <end position="457"/>
    </location>
</feature>
<comment type="catalytic activity">
    <reaction evidence="1">
        <text>2-(N(omega)-L-arginino)succinate = fumarate + L-arginine</text>
        <dbReference type="Rhea" id="RHEA:24020"/>
        <dbReference type="ChEBI" id="CHEBI:29806"/>
        <dbReference type="ChEBI" id="CHEBI:32682"/>
        <dbReference type="ChEBI" id="CHEBI:57472"/>
        <dbReference type="EC" id="4.3.2.1"/>
    </reaction>
</comment>
<comment type="pathway">
    <text evidence="1">Amino-acid biosynthesis; L-arginine biosynthesis; L-arginine from L-ornithine and carbamoyl phosphate: step 3/3.</text>
</comment>
<comment type="subcellular location">
    <subcellularLocation>
        <location evidence="1">Cytoplasm</location>
    </subcellularLocation>
</comment>
<comment type="similarity">
    <text evidence="1">Belongs to the lyase 1 family. Argininosuccinate lyase subfamily.</text>
</comment>